<feature type="chain" id="PRO_0000273306" description="Segregation and condensation protein B">
    <location>
        <begin position="1"/>
        <end position="180"/>
    </location>
</feature>
<proteinExistence type="inferred from homology"/>
<protein>
    <recommendedName>
        <fullName evidence="1">Segregation and condensation protein B</fullName>
    </recommendedName>
</protein>
<name>SCPB_STAA8</name>
<reference key="1">
    <citation type="book" date="2006" name="Gram positive pathogens, 2nd edition">
        <title>The Staphylococcus aureus NCTC 8325 genome.</title>
        <editorList>
            <person name="Fischetti V."/>
            <person name="Novick R."/>
            <person name="Ferretti J."/>
            <person name="Portnoy D."/>
            <person name="Rood J."/>
        </editorList>
        <authorList>
            <person name="Gillaspy A.F."/>
            <person name="Worrell V."/>
            <person name="Orvis J."/>
            <person name="Roe B.A."/>
            <person name="Dyer D.W."/>
            <person name="Iandolo J.J."/>
        </authorList>
    </citation>
    <scope>NUCLEOTIDE SEQUENCE [LARGE SCALE GENOMIC DNA]</scope>
    <source>
        <strain>NCTC 8325 / PS 47</strain>
    </source>
</reference>
<accession>Q2FY77</accession>
<evidence type="ECO:0000255" key="1">
    <source>
        <dbReference type="HAMAP-Rule" id="MF_01804"/>
    </source>
</evidence>
<gene>
    <name evidence="1" type="primary">scpB</name>
    <name type="ordered locus">SAOUHSC_01588</name>
</gene>
<keyword id="KW-0131">Cell cycle</keyword>
<keyword id="KW-0132">Cell division</keyword>
<keyword id="KW-0159">Chromosome partition</keyword>
<keyword id="KW-0963">Cytoplasm</keyword>
<keyword id="KW-1185">Reference proteome</keyword>
<sequence length="180" mass="20236">MDNHGILESLLFTAGDEGLDEKQLLEILDMSKDQLVELIENYSSHGLMIQRFGMTYVLTTKKEAATYIEQLIEQKSQMKLSQAAMEVLSIIAYNQPLSRSDIELIRSINSDGAVKTLIAKGLVEAKVVNEQRSQQLITTDLFLNVFGISNIEDLPTTEEDDEEMDAFFSNLVNQKGENND</sequence>
<dbReference type="EMBL" id="CP000253">
    <property type="protein sequence ID" value="ABD30667.1"/>
    <property type="molecule type" value="Genomic_DNA"/>
</dbReference>
<dbReference type="RefSeq" id="WP_000368653.1">
    <property type="nucleotide sequence ID" value="NZ_LS483365.1"/>
</dbReference>
<dbReference type="RefSeq" id="YP_500103.1">
    <property type="nucleotide sequence ID" value="NC_007795.1"/>
</dbReference>
<dbReference type="SMR" id="Q2FY77"/>
<dbReference type="STRING" id="93061.SAOUHSC_01588"/>
<dbReference type="PaxDb" id="1280-SAXN108_1517"/>
<dbReference type="GeneID" id="3920004"/>
<dbReference type="KEGG" id="sao:SAOUHSC_01588"/>
<dbReference type="PATRIC" id="fig|93061.5.peg.1445"/>
<dbReference type="eggNOG" id="COG1386">
    <property type="taxonomic scope" value="Bacteria"/>
</dbReference>
<dbReference type="HOGENOM" id="CLU_045647_5_3_9"/>
<dbReference type="OrthoDB" id="9806226at2"/>
<dbReference type="PRO" id="PR:Q2FY77"/>
<dbReference type="Proteomes" id="UP000008816">
    <property type="component" value="Chromosome"/>
</dbReference>
<dbReference type="GO" id="GO:0005737">
    <property type="term" value="C:cytoplasm"/>
    <property type="evidence" value="ECO:0007669"/>
    <property type="project" value="UniProtKB-SubCell"/>
</dbReference>
<dbReference type="GO" id="GO:0051301">
    <property type="term" value="P:cell division"/>
    <property type="evidence" value="ECO:0007669"/>
    <property type="project" value="UniProtKB-KW"/>
</dbReference>
<dbReference type="GO" id="GO:0051304">
    <property type="term" value="P:chromosome separation"/>
    <property type="evidence" value="ECO:0007669"/>
    <property type="project" value="InterPro"/>
</dbReference>
<dbReference type="GO" id="GO:0006260">
    <property type="term" value="P:DNA replication"/>
    <property type="evidence" value="ECO:0007669"/>
    <property type="project" value="UniProtKB-UniRule"/>
</dbReference>
<dbReference type="Gene3D" id="1.10.10.10">
    <property type="entry name" value="Winged helix-like DNA-binding domain superfamily/Winged helix DNA-binding domain"/>
    <property type="match status" value="2"/>
</dbReference>
<dbReference type="HAMAP" id="MF_01804">
    <property type="entry name" value="ScpB"/>
    <property type="match status" value="1"/>
</dbReference>
<dbReference type="InterPro" id="IPR005234">
    <property type="entry name" value="ScpB_csome_segregation"/>
</dbReference>
<dbReference type="InterPro" id="IPR036388">
    <property type="entry name" value="WH-like_DNA-bd_sf"/>
</dbReference>
<dbReference type="InterPro" id="IPR036390">
    <property type="entry name" value="WH_DNA-bd_sf"/>
</dbReference>
<dbReference type="NCBIfam" id="TIGR00281">
    <property type="entry name" value="SMC-Scp complex subunit ScpB"/>
    <property type="match status" value="1"/>
</dbReference>
<dbReference type="PANTHER" id="PTHR34298">
    <property type="entry name" value="SEGREGATION AND CONDENSATION PROTEIN B"/>
    <property type="match status" value="1"/>
</dbReference>
<dbReference type="PANTHER" id="PTHR34298:SF2">
    <property type="entry name" value="SEGREGATION AND CONDENSATION PROTEIN B"/>
    <property type="match status" value="1"/>
</dbReference>
<dbReference type="Pfam" id="PF04079">
    <property type="entry name" value="SMC_ScpB"/>
    <property type="match status" value="1"/>
</dbReference>
<dbReference type="PIRSF" id="PIRSF019345">
    <property type="entry name" value="ScpB"/>
    <property type="match status" value="1"/>
</dbReference>
<dbReference type="SUPFAM" id="SSF46785">
    <property type="entry name" value="Winged helix' DNA-binding domain"/>
    <property type="match status" value="2"/>
</dbReference>
<comment type="function">
    <text evidence="1">Participates in chromosomal partition during cell division. May act via the formation of a condensin-like complex containing Smc and ScpA that pull DNA away from mid-cell into both cell halves.</text>
</comment>
<comment type="subunit">
    <text evidence="1">Homodimer. Homodimerization may be required to stabilize the binding of ScpA to the Smc head domains. Component of a cohesin-like complex composed of ScpA, ScpB and the Smc homodimer, in which ScpA and ScpB bind to the head domain of Smc. The presence of the three proteins is required for the association of the complex with DNA.</text>
</comment>
<comment type="subcellular location">
    <subcellularLocation>
        <location evidence="1">Cytoplasm</location>
    </subcellularLocation>
    <text evidence="1">Associated with two foci at the outer edges of the nucleoid region in young cells, and at four foci within both cell halves in older cells.</text>
</comment>
<comment type="similarity">
    <text evidence="1">Belongs to the ScpB family.</text>
</comment>
<organism>
    <name type="scientific">Staphylococcus aureus (strain NCTC 8325 / PS 47)</name>
    <dbReference type="NCBI Taxonomy" id="93061"/>
    <lineage>
        <taxon>Bacteria</taxon>
        <taxon>Bacillati</taxon>
        <taxon>Bacillota</taxon>
        <taxon>Bacilli</taxon>
        <taxon>Bacillales</taxon>
        <taxon>Staphylococcaceae</taxon>
        <taxon>Staphylococcus</taxon>
    </lineage>
</organism>